<name>SLB_BOTIN</name>
<evidence type="ECO:0000255" key="1">
    <source>
        <dbReference type="PROSITE-ProRule" id="PRU00040"/>
    </source>
</evidence>
<evidence type="ECO:0000269" key="2">
    <source>
    </source>
</evidence>
<evidence type="ECO:0000305" key="3"/>
<reference key="1">
    <citation type="journal article" date="2008" name="Toxicon">
        <title>Identification and characterization of a new member of snake venom thrombin inhibitors from Bothrops insularis using a proteomic approach.</title>
        <authorList>
            <person name="Oliveira-Carvalho A.L."/>
            <person name="Guimaraes P.R."/>
            <person name="Abreu P.A."/>
            <person name="Dutra D.L.S."/>
            <person name="Junqueira-de-Azevedo I.L.M."/>
            <person name="Rodrigues C.R."/>
            <person name="Ho P.L."/>
            <person name="Castro H.C."/>
            <person name="Zingali R.B."/>
        </authorList>
    </citation>
    <scope>PROTEIN SEQUENCE</scope>
    <scope>FUNCTION</scope>
    <scope>SUBUNIT</scope>
    <scope>SUBCELLULAR LOCATION</scope>
    <scope>TISSUE SPECIFICITY</scope>
    <source>
        <tissue>Venom</tissue>
    </source>
</reference>
<proteinExistence type="evidence at protein level"/>
<keyword id="KW-1203">Blood coagulation cascade inhibiting toxin</keyword>
<keyword id="KW-0903">Direct protein sequencing</keyword>
<keyword id="KW-1015">Disulfide bond</keyword>
<keyword id="KW-1199">Hemostasis impairing toxin</keyword>
<keyword id="KW-1201">Platelet aggregation inhibiting toxin</keyword>
<keyword id="KW-0964">Secreted</keyword>
<keyword id="KW-0800">Toxin</keyword>
<comment type="function">
    <text evidence="2">Thrombin and prothrombin (F2) inhibitor. The IC(50) of thrombin-induced platelet aggregation and fibrinocoagulation is 62 and 35 nM, respectively. Its inhibitory activity is at least 10-fold lower than that observed for other thrombin inhibitors.</text>
</comment>
<comment type="subunit">
    <text evidence="2">Heterodimer of subunits alpha and beta; disulfide-linked.</text>
</comment>
<comment type="subcellular location">
    <subcellularLocation>
        <location evidence="2">Secreted</location>
    </subcellularLocation>
</comment>
<comment type="tissue specificity">
    <text evidence="2">Expressed by the venom gland.</text>
</comment>
<comment type="similarity">
    <text evidence="3">Belongs to the snaclec family.</text>
</comment>
<feature type="chain" id="PRO_0000370638" description="Snaclec bothroinsularin subunit beta">
    <location>
        <begin position="1"/>
        <end position="127"/>
    </location>
</feature>
<feature type="domain" description="C-type lectin" evidence="1">
    <location>
        <begin position="9"/>
        <end position="124"/>
    </location>
</feature>
<feature type="disulfide bond" evidence="1">
    <location>
        <begin position="2"/>
        <end position="13"/>
    </location>
</feature>
<feature type="disulfide bond" evidence="1">
    <location>
        <begin position="30"/>
        <end position="123"/>
    </location>
</feature>
<feature type="disulfide bond" description="Interchain (with C-79 in alpha chain)" evidence="1">
    <location>
        <position position="75"/>
    </location>
</feature>
<feature type="disulfide bond" evidence="1">
    <location>
        <begin position="100"/>
        <end position="115"/>
    </location>
</feature>
<organism>
    <name type="scientific">Bothrops insularis</name>
    <name type="common">Golden lancehead</name>
    <name type="synonym">Lachesis insularis</name>
    <dbReference type="NCBI Taxonomy" id="8723"/>
    <lineage>
        <taxon>Eukaryota</taxon>
        <taxon>Metazoa</taxon>
        <taxon>Chordata</taxon>
        <taxon>Craniata</taxon>
        <taxon>Vertebrata</taxon>
        <taxon>Euteleostomi</taxon>
        <taxon>Lepidosauria</taxon>
        <taxon>Squamata</taxon>
        <taxon>Bifurcata</taxon>
        <taxon>Unidentata</taxon>
        <taxon>Episquamata</taxon>
        <taxon>Toxicofera</taxon>
        <taxon>Serpentes</taxon>
        <taxon>Colubroidea</taxon>
        <taxon>Viperidae</taxon>
        <taxon>Crotalinae</taxon>
        <taxon>Bothrops</taxon>
    </lineage>
</organism>
<dbReference type="SMR" id="P0C930"/>
<dbReference type="GO" id="GO:0005576">
    <property type="term" value="C:extracellular region"/>
    <property type="evidence" value="ECO:0007669"/>
    <property type="project" value="UniProtKB-SubCell"/>
</dbReference>
<dbReference type="GO" id="GO:0090729">
    <property type="term" value="F:toxin activity"/>
    <property type="evidence" value="ECO:0007669"/>
    <property type="project" value="UniProtKB-KW"/>
</dbReference>
<dbReference type="FunFam" id="3.10.100.10:FF:000087">
    <property type="entry name" value="Snaclec rhodocetin subunit delta"/>
    <property type="match status" value="1"/>
</dbReference>
<dbReference type="Gene3D" id="3.10.100.10">
    <property type="entry name" value="Mannose-Binding Protein A, subunit A"/>
    <property type="match status" value="1"/>
</dbReference>
<dbReference type="InterPro" id="IPR001304">
    <property type="entry name" value="C-type_lectin-like"/>
</dbReference>
<dbReference type="InterPro" id="IPR016186">
    <property type="entry name" value="C-type_lectin-like/link_sf"/>
</dbReference>
<dbReference type="InterPro" id="IPR050111">
    <property type="entry name" value="C-type_lectin/snaclec_domain"/>
</dbReference>
<dbReference type="InterPro" id="IPR016187">
    <property type="entry name" value="CTDL_fold"/>
</dbReference>
<dbReference type="PANTHER" id="PTHR22803">
    <property type="entry name" value="MANNOSE, PHOSPHOLIPASE, LECTIN RECEPTOR RELATED"/>
    <property type="match status" value="1"/>
</dbReference>
<dbReference type="Pfam" id="PF00059">
    <property type="entry name" value="Lectin_C"/>
    <property type="match status" value="1"/>
</dbReference>
<dbReference type="SMART" id="SM00034">
    <property type="entry name" value="CLECT"/>
    <property type="match status" value="1"/>
</dbReference>
<dbReference type="SUPFAM" id="SSF56436">
    <property type="entry name" value="C-type lectin-like"/>
    <property type="match status" value="1"/>
</dbReference>
<dbReference type="PROSITE" id="PS50041">
    <property type="entry name" value="C_TYPE_LECTIN_2"/>
    <property type="match status" value="1"/>
</dbReference>
<protein>
    <recommendedName>
        <fullName>Snaclec bothroinsularin subunit beta</fullName>
        <shortName>BIN</shortName>
    </recommendedName>
</protein>
<accession>P0C930</accession>
<sequence length="127" mass="14874">DCPPDWSSYEGSCYRVFEQKMNWEDAEKFCTQQQTGGHLVSFQSSEEADFVVSLTSPILRDSFVWTGLSDVWKGCRFEWSDGSDLSYKDNYQFVFSEYECVASKTKNNKWRIIPCTKLEYFVCEFQA</sequence>